<dbReference type="EC" id="3.5.3.1" evidence="2"/>
<dbReference type="EMBL" id="U08408">
    <property type="protein sequence ID" value="AAA56893.1"/>
    <property type="molecule type" value="mRNA"/>
</dbReference>
<dbReference type="EMBL" id="BC094076">
    <property type="protein sequence ID" value="AAH94076.1"/>
    <property type="molecule type" value="mRNA"/>
</dbReference>
<dbReference type="PIR" id="I51665">
    <property type="entry name" value="I51665"/>
</dbReference>
<dbReference type="SMR" id="Q91555"/>
<dbReference type="AGR" id="Xenbase:XB-GENE-864893"/>
<dbReference type="Xenbase" id="XB-GENE-864893">
    <property type="gene designation" value="arg2.L"/>
</dbReference>
<dbReference type="OMA" id="VMQEAQY"/>
<dbReference type="UniPathway" id="UPA00158">
    <property type="reaction ID" value="UER00270"/>
</dbReference>
<dbReference type="Proteomes" id="UP000186698">
    <property type="component" value="Unplaced"/>
</dbReference>
<dbReference type="GO" id="GO:0005737">
    <property type="term" value="C:cytoplasm"/>
    <property type="evidence" value="ECO:0000318"/>
    <property type="project" value="GO_Central"/>
</dbReference>
<dbReference type="GO" id="GO:0005739">
    <property type="term" value="C:mitochondrion"/>
    <property type="evidence" value="ECO:0000318"/>
    <property type="project" value="GO_Central"/>
</dbReference>
<dbReference type="GO" id="GO:0004053">
    <property type="term" value="F:arginase activity"/>
    <property type="evidence" value="ECO:0000318"/>
    <property type="project" value="GO_Central"/>
</dbReference>
<dbReference type="GO" id="GO:0030145">
    <property type="term" value="F:manganese ion binding"/>
    <property type="evidence" value="ECO:0000318"/>
    <property type="project" value="GO_Central"/>
</dbReference>
<dbReference type="GO" id="GO:0019547">
    <property type="term" value="P:arginine catabolic process to ornithine"/>
    <property type="evidence" value="ECO:0000318"/>
    <property type="project" value="GO_Central"/>
</dbReference>
<dbReference type="GO" id="GO:0000050">
    <property type="term" value="P:urea cycle"/>
    <property type="evidence" value="ECO:0007669"/>
    <property type="project" value="UniProtKB-UniPathway"/>
</dbReference>
<dbReference type="CDD" id="cd09989">
    <property type="entry name" value="Arginase"/>
    <property type="match status" value="1"/>
</dbReference>
<dbReference type="FunFam" id="3.40.800.10:FF:000008">
    <property type="entry name" value="Arginase"/>
    <property type="match status" value="1"/>
</dbReference>
<dbReference type="Gene3D" id="3.40.800.10">
    <property type="entry name" value="Ureohydrolase domain"/>
    <property type="match status" value="1"/>
</dbReference>
<dbReference type="InterPro" id="IPR014033">
    <property type="entry name" value="Arginase"/>
</dbReference>
<dbReference type="InterPro" id="IPR006035">
    <property type="entry name" value="Ureohydrolase"/>
</dbReference>
<dbReference type="InterPro" id="IPR023696">
    <property type="entry name" value="Ureohydrolase_dom_sf"/>
</dbReference>
<dbReference type="InterPro" id="IPR020855">
    <property type="entry name" value="Ureohydrolase_Mn_BS"/>
</dbReference>
<dbReference type="NCBIfam" id="TIGR01229">
    <property type="entry name" value="rocF_arginase"/>
    <property type="match status" value="1"/>
</dbReference>
<dbReference type="PANTHER" id="PTHR43782">
    <property type="entry name" value="ARGINASE"/>
    <property type="match status" value="1"/>
</dbReference>
<dbReference type="PANTHER" id="PTHR43782:SF4">
    <property type="entry name" value="ARGINASE-2, MITOCHONDRIAL"/>
    <property type="match status" value="1"/>
</dbReference>
<dbReference type="Pfam" id="PF00491">
    <property type="entry name" value="Arginase"/>
    <property type="match status" value="1"/>
</dbReference>
<dbReference type="PIRSF" id="PIRSF036979">
    <property type="entry name" value="Arginase"/>
    <property type="match status" value="1"/>
</dbReference>
<dbReference type="PRINTS" id="PR00116">
    <property type="entry name" value="ARGINASE"/>
</dbReference>
<dbReference type="SUPFAM" id="SSF52768">
    <property type="entry name" value="Arginase/deacetylase"/>
    <property type="match status" value="1"/>
</dbReference>
<dbReference type="PROSITE" id="PS01053">
    <property type="entry name" value="ARGINASE_1"/>
    <property type="match status" value="1"/>
</dbReference>
<dbReference type="PROSITE" id="PS51409">
    <property type="entry name" value="ARGINASE_2"/>
    <property type="match status" value="1"/>
</dbReference>
<evidence type="ECO:0000250" key="1"/>
<evidence type="ECO:0000250" key="2">
    <source>
        <dbReference type="UniProtKB" id="P05089"/>
    </source>
</evidence>
<evidence type="ECO:0000250" key="3">
    <source>
        <dbReference type="UniProtKB" id="P53608"/>
    </source>
</evidence>
<evidence type="ECO:0000250" key="4">
    <source>
        <dbReference type="UniProtKB" id="P78540"/>
    </source>
</evidence>
<evidence type="ECO:0000255" key="5">
    <source>
        <dbReference type="PROSITE-ProRule" id="PRU00742"/>
    </source>
</evidence>
<protein>
    <recommendedName>
        <fullName>Arginase, non-hepatic 3</fullName>
        <ecNumber evidence="2">3.5.3.1</ecNumber>
    </recommendedName>
</protein>
<organism>
    <name type="scientific">Xenopus laevis</name>
    <name type="common">African clawed frog</name>
    <dbReference type="NCBI Taxonomy" id="8355"/>
    <lineage>
        <taxon>Eukaryota</taxon>
        <taxon>Metazoa</taxon>
        <taxon>Chordata</taxon>
        <taxon>Craniata</taxon>
        <taxon>Vertebrata</taxon>
        <taxon>Euteleostomi</taxon>
        <taxon>Amphibia</taxon>
        <taxon>Batrachia</taxon>
        <taxon>Anura</taxon>
        <taxon>Pipoidea</taxon>
        <taxon>Pipidae</taxon>
        <taxon>Xenopodinae</taxon>
        <taxon>Xenopus</taxon>
        <taxon>Xenopus</taxon>
    </lineage>
</organism>
<sequence length="360" mass="39238">MSIRSNFVRLLKKQVNIIKLQKKCSHSVAVIGAPFSKGQKRRGVEHGPAAIRSAGLIDRLSNLGCNVCDFGDLHFSQVPNDEQYNSIVKHPRTVGLACKVLAKEVGKAVGAGHTCVTLGGDHSLAFGSITGHAQQCPDLCVIWVDAHADINTPLTTPSGNLHGQPVSFLLRELQDKIPPIPGFSWAKPCLSKSDIVYIGLRDLDPAEQFILKNYNISYYSMRHIDCMGIRKVMEKTFDQLLGRRDRPIHLSFDIDAFDPALAPATGTPVIGGLTYREGVYITEEIHNTGMLSALDLVEVNPVLATTSEEVKATANLAVDVIASCFGQTREGAHTRADTIIDVLPTPSTSYESDNEEQVRI</sequence>
<name>ARGN3_XENLA</name>
<feature type="chain" id="PRO_0000173701" description="Arginase, non-hepatic 3">
    <location>
        <begin position="1"/>
        <end position="360"/>
    </location>
</feature>
<feature type="binding site" evidence="5">
    <location>
        <position position="122"/>
    </location>
    <ligand>
        <name>Mn(2+)</name>
        <dbReference type="ChEBI" id="CHEBI:29035"/>
        <label>1</label>
    </ligand>
</feature>
<feature type="binding site" evidence="5">
    <location>
        <position position="145"/>
    </location>
    <ligand>
        <name>Mn(2+)</name>
        <dbReference type="ChEBI" id="CHEBI:29035"/>
        <label>1</label>
    </ligand>
</feature>
<feature type="binding site" evidence="5">
    <location>
        <position position="145"/>
    </location>
    <ligand>
        <name>Mn(2+)</name>
        <dbReference type="ChEBI" id="CHEBI:29035"/>
        <label>2</label>
    </ligand>
</feature>
<feature type="binding site" evidence="2">
    <location>
        <begin position="147"/>
        <end position="151"/>
    </location>
    <ligand>
        <name>substrate</name>
    </ligand>
</feature>
<feature type="binding site" evidence="5">
    <location>
        <position position="147"/>
    </location>
    <ligand>
        <name>Mn(2+)</name>
        <dbReference type="ChEBI" id="CHEBI:29035"/>
        <label>2</label>
    </ligand>
</feature>
<feature type="binding site" evidence="5">
    <location>
        <position position="149"/>
    </location>
    <ligand>
        <name>Mn(2+)</name>
        <dbReference type="ChEBI" id="CHEBI:29035"/>
        <label>1</label>
    </ligand>
</feature>
<feature type="binding site" evidence="2">
    <location>
        <begin position="158"/>
        <end position="160"/>
    </location>
    <ligand>
        <name>substrate</name>
    </ligand>
</feature>
<feature type="binding site" evidence="2">
    <location>
        <position position="204"/>
    </location>
    <ligand>
        <name>substrate</name>
    </ligand>
</feature>
<feature type="binding site" evidence="5">
    <location>
        <position position="253"/>
    </location>
    <ligand>
        <name>Mn(2+)</name>
        <dbReference type="ChEBI" id="CHEBI:29035"/>
        <label>1</label>
    </ligand>
</feature>
<feature type="binding site" evidence="5">
    <location>
        <position position="253"/>
    </location>
    <ligand>
        <name>Mn(2+)</name>
        <dbReference type="ChEBI" id="CHEBI:29035"/>
        <label>2</label>
    </ligand>
</feature>
<feature type="binding site" evidence="5">
    <location>
        <position position="255"/>
    </location>
    <ligand>
        <name>Mn(2+)</name>
        <dbReference type="ChEBI" id="CHEBI:29035"/>
        <label>2</label>
    </ligand>
</feature>
<feature type="binding site" evidence="3">
    <location>
        <position position="267"/>
    </location>
    <ligand>
        <name>substrate</name>
    </ligand>
</feature>
<feature type="binding site" evidence="4">
    <location>
        <position position="298"/>
    </location>
    <ligand>
        <name>substrate</name>
    </ligand>
</feature>
<proteinExistence type="evidence at transcript level"/>
<keyword id="KW-0056">Arginine metabolism</keyword>
<keyword id="KW-0378">Hydrolase</keyword>
<keyword id="KW-0464">Manganese</keyword>
<keyword id="KW-0479">Metal-binding</keyword>
<keyword id="KW-1185">Reference proteome</keyword>
<keyword id="KW-0835">Urea cycle</keyword>
<accession>Q91555</accession>
<accession>Q52L42</accession>
<reference key="1">
    <citation type="journal article" date="1994" name="J. Biol. Chem.">
        <title>Thyroid hormone-dependent differential regulation of multiple arginase genes during amphibian metamorphosis.</title>
        <authorList>
            <person name="Patterton D."/>
            <person name="Shi Y.-B."/>
        </authorList>
    </citation>
    <scope>NUCLEOTIDE SEQUENCE [MRNA]</scope>
    <source>
        <tissue>Intestine</tissue>
    </source>
</reference>
<reference key="2">
    <citation type="submission" date="2005-04" db="EMBL/GenBank/DDBJ databases">
        <authorList>
            <consortium name="NIH - Xenopus Gene Collection (XGC) project"/>
        </authorList>
    </citation>
    <scope>NUCLEOTIDE SEQUENCE [LARGE SCALE MRNA] OF 2-360</scope>
    <source>
        <tissue>Eye</tissue>
    </source>
</reference>
<comment type="function">
    <text>As well as its role in the urea cycle, may be involved in tissue remodeling.</text>
</comment>
<comment type="catalytic activity">
    <reaction evidence="2">
        <text>L-arginine + H2O = urea + L-ornithine</text>
        <dbReference type="Rhea" id="RHEA:20569"/>
        <dbReference type="ChEBI" id="CHEBI:15377"/>
        <dbReference type="ChEBI" id="CHEBI:16199"/>
        <dbReference type="ChEBI" id="CHEBI:32682"/>
        <dbReference type="ChEBI" id="CHEBI:46911"/>
        <dbReference type="EC" id="3.5.3.1"/>
    </reaction>
</comment>
<comment type="cofactor">
    <cofactor evidence="5">
        <name>Mn(2+)</name>
        <dbReference type="ChEBI" id="CHEBI:29035"/>
    </cofactor>
    <text evidence="5">Binds 2 manganese ions per subunit.</text>
</comment>
<comment type="pathway">
    <text evidence="2">Nitrogen metabolism; urea cycle; L-ornithine and urea from L-arginine: step 1/1.</text>
</comment>
<comment type="subunit">
    <text evidence="1">Homotrimer.</text>
</comment>
<comment type="tissue specificity">
    <text>Expressed at differing tadpole stages in tail, intestine, hindlimb and trunk region. Strongest in tadpole tail.</text>
</comment>
<comment type="developmental stage">
    <text>First detected in early tailbud (stage 23/24). Highest levels in whole tadpole found around stage 47/48. In the intestine, increased levels are found during metamorphosis (stages 58-64) and in the hindlimb, expressed at low levels during metamorphosis until stage 66 when levels dramatically increase. In the tail, a constant high level of expression is found throughout metamorphosis.</text>
</comment>
<comment type="induction">
    <text>By thyroid hormone (T3).</text>
</comment>
<comment type="similarity">
    <text evidence="5">Belongs to the arginase family.</text>
</comment>
<gene>
    <name type="primary">arg2-c</name>
    <name type="synonym">arg3</name>
</gene>